<keyword id="KW-0472">Membrane</keyword>
<keyword id="KW-0496">Mitochondrion</keyword>
<keyword id="KW-0999">Mitochondrion inner membrane</keyword>
<keyword id="KW-0560">Oxidoreductase</keyword>
<keyword id="KW-1185">Reference proteome</keyword>
<keyword id="KW-0809">Transit peptide</keyword>
<keyword id="KW-0812">Transmembrane</keyword>
<keyword id="KW-1133">Transmembrane helix</keyword>
<feature type="transit peptide" description="Mitochondrion" evidence="2">
    <location>
        <begin position="1"/>
        <end position="27"/>
    </location>
</feature>
<feature type="chain" id="PRO_0000006095" description="Cytochrome c oxidase subunit 5, mitochondrial">
    <location>
        <begin position="28"/>
        <end position="171"/>
    </location>
</feature>
<feature type="topological domain" description="Mitochondrial matrix" evidence="1">
    <location>
        <begin position="28"/>
        <end position="100"/>
    </location>
</feature>
<feature type="transmembrane region" description="Helical" evidence="2">
    <location>
        <begin position="101"/>
        <end position="123"/>
    </location>
</feature>
<feature type="topological domain" description="Mitochondrial intermembrane" evidence="1">
    <location>
        <begin position="124"/>
        <end position="171"/>
    </location>
</feature>
<feature type="region of interest" description="Disordered" evidence="3">
    <location>
        <begin position="145"/>
        <end position="171"/>
    </location>
</feature>
<dbReference type="EMBL" id="M24389">
    <property type="protein sequence ID" value="AAA31957.2"/>
    <property type="molecule type" value="Genomic_DNA"/>
</dbReference>
<dbReference type="EMBL" id="AL355933">
    <property type="protein sequence ID" value="CAB91450.1"/>
    <property type="molecule type" value="Genomic_DNA"/>
</dbReference>
<dbReference type="EMBL" id="CM002237">
    <property type="protein sequence ID" value="EAA34212.1"/>
    <property type="molecule type" value="Genomic_DNA"/>
</dbReference>
<dbReference type="EMBL" id="M12117">
    <property type="protein sequence ID" value="AAA33575.1"/>
    <property type="molecule type" value="Genomic_DNA"/>
</dbReference>
<dbReference type="PIR" id="A30134">
    <property type="entry name" value="OTNCV"/>
</dbReference>
<dbReference type="RefSeq" id="XP_963448.1">
    <property type="nucleotide sequence ID" value="XM_958355.2"/>
</dbReference>
<dbReference type="SMR" id="P06810"/>
<dbReference type="FunCoup" id="P06810">
    <property type="interactions" value="109"/>
</dbReference>
<dbReference type="STRING" id="367110.P06810"/>
<dbReference type="PaxDb" id="5141-EFNCRP00000006586"/>
<dbReference type="EnsemblFungi" id="EAA34212">
    <property type="protein sequence ID" value="EAA34212"/>
    <property type="gene ID" value="NCU05457"/>
</dbReference>
<dbReference type="GeneID" id="3879597"/>
<dbReference type="KEGG" id="ncr:NCU05457"/>
<dbReference type="VEuPathDB" id="FungiDB:NCU05457"/>
<dbReference type="HOGENOM" id="CLU_070101_2_0_1"/>
<dbReference type="InParanoid" id="P06810"/>
<dbReference type="OMA" id="YVIHLFA"/>
<dbReference type="OrthoDB" id="186013at2759"/>
<dbReference type="UniPathway" id="UPA00705"/>
<dbReference type="Proteomes" id="UP000001805">
    <property type="component" value="Chromosome 6, Linkage Group II"/>
</dbReference>
<dbReference type="GO" id="GO:0005743">
    <property type="term" value="C:mitochondrial inner membrane"/>
    <property type="evidence" value="ECO:0007669"/>
    <property type="project" value="UniProtKB-SubCell"/>
</dbReference>
<dbReference type="GO" id="GO:0045277">
    <property type="term" value="C:respiratory chain complex IV"/>
    <property type="evidence" value="ECO:0000318"/>
    <property type="project" value="GO_Central"/>
</dbReference>
<dbReference type="GO" id="GO:0004129">
    <property type="term" value="F:cytochrome-c oxidase activity"/>
    <property type="evidence" value="ECO:0007669"/>
    <property type="project" value="EnsemblFungi"/>
</dbReference>
<dbReference type="GO" id="GO:0006123">
    <property type="term" value="P:mitochondrial electron transport, cytochrome c to oxygen"/>
    <property type="evidence" value="ECO:0000318"/>
    <property type="project" value="GO_Central"/>
</dbReference>
<dbReference type="CDD" id="cd00922">
    <property type="entry name" value="Cyt_c_Oxidase_IV"/>
    <property type="match status" value="1"/>
</dbReference>
<dbReference type="FunFam" id="1.10.442.10:FF:000002">
    <property type="entry name" value="Cytochrome c oxidase subunit V"/>
    <property type="match status" value="1"/>
</dbReference>
<dbReference type="Gene3D" id="1.10.442.10">
    <property type="entry name" value="Cytochrome c oxidase subunit IV"/>
    <property type="match status" value="1"/>
</dbReference>
<dbReference type="InterPro" id="IPR004203">
    <property type="entry name" value="Cyt_c_oxidase_su4_fam"/>
</dbReference>
<dbReference type="InterPro" id="IPR036639">
    <property type="entry name" value="Cyt_c_oxidase_su4_sf"/>
</dbReference>
<dbReference type="PANTHER" id="PTHR10707:SF10">
    <property type="entry name" value="CYTOCHROME C OXIDASE SUBUNIT 4"/>
    <property type="match status" value="1"/>
</dbReference>
<dbReference type="PANTHER" id="PTHR10707">
    <property type="entry name" value="CYTOCHROME C OXIDASE SUBUNIT IV"/>
    <property type="match status" value="1"/>
</dbReference>
<dbReference type="Pfam" id="PF02936">
    <property type="entry name" value="COX4"/>
    <property type="match status" value="1"/>
</dbReference>
<dbReference type="SUPFAM" id="SSF81406">
    <property type="entry name" value="Mitochondrial cytochrome c oxidase subunit IV"/>
    <property type="match status" value="1"/>
</dbReference>
<gene>
    <name type="primary">cya-4</name>
    <name type="ORF">B8B20.30</name>
    <name type="ORF">NCU05457</name>
</gene>
<evidence type="ECO:0000250" key="1">
    <source>
        <dbReference type="UniProtKB" id="P00424"/>
    </source>
</evidence>
<evidence type="ECO:0000255" key="2"/>
<evidence type="ECO:0000256" key="3">
    <source>
        <dbReference type="SAM" id="MobiDB-lite"/>
    </source>
</evidence>
<evidence type="ECO:0000269" key="4">
    <source>
    </source>
</evidence>
<evidence type="ECO:0000269" key="5">
    <source>
    </source>
</evidence>
<evidence type="ECO:0000303" key="6">
    <source>
    </source>
</evidence>
<evidence type="ECO:0000305" key="7"/>
<reference key="1">
    <citation type="journal article" date="1989" name="Mol. Cell. Biol.">
        <title>Cytochrome oxidase subunit V gene of Neurospora crassa: DNA sequences, chromosomal mapping, and evidence that the cya-4 locus specifies the structural gene for subunit V.</title>
        <authorList>
            <person name="Sachs M.S."/>
            <person name="Bertrand H."/>
            <person name="Metzenberg R.L."/>
            <person name="RajBhandary U.L."/>
        </authorList>
    </citation>
    <scope>NUCLEOTIDE SEQUENCE [GENOMIC DNA]</scope>
</reference>
<reference key="2">
    <citation type="journal article" date="2003" name="Nucleic Acids Res.">
        <title>What's in the genome of a filamentous fungus? Analysis of the Neurospora genome sequence.</title>
        <authorList>
            <person name="Mannhaupt G."/>
            <person name="Montrone C."/>
            <person name="Haase D."/>
            <person name="Mewes H.-W."/>
            <person name="Aign V."/>
            <person name="Hoheisel J.D."/>
            <person name="Fartmann B."/>
            <person name="Nyakatura G."/>
            <person name="Kempken F."/>
            <person name="Maier J."/>
            <person name="Schulte U."/>
        </authorList>
    </citation>
    <scope>NUCLEOTIDE SEQUENCE [LARGE SCALE GENOMIC DNA]</scope>
    <source>
        <strain>ATCC 24698 / 74-OR23-1A / CBS 708.71 / DSM 1257 / FGSC 987</strain>
    </source>
</reference>
<reference key="3">
    <citation type="journal article" date="2003" name="Nature">
        <title>The genome sequence of the filamentous fungus Neurospora crassa.</title>
        <authorList>
            <person name="Galagan J.E."/>
            <person name="Calvo S.E."/>
            <person name="Borkovich K.A."/>
            <person name="Selker E.U."/>
            <person name="Read N.D."/>
            <person name="Jaffe D.B."/>
            <person name="FitzHugh W."/>
            <person name="Ma L.-J."/>
            <person name="Smirnov S."/>
            <person name="Purcell S."/>
            <person name="Rehman B."/>
            <person name="Elkins T."/>
            <person name="Engels R."/>
            <person name="Wang S."/>
            <person name="Nielsen C.B."/>
            <person name="Butler J."/>
            <person name="Endrizzi M."/>
            <person name="Qui D."/>
            <person name="Ianakiev P."/>
            <person name="Bell-Pedersen D."/>
            <person name="Nelson M.A."/>
            <person name="Werner-Washburne M."/>
            <person name="Selitrennikoff C.P."/>
            <person name="Kinsey J.A."/>
            <person name="Braun E.L."/>
            <person name="Zelter A."/>
            <person name="Schulte U."/>
            <person name="Kothe G.O."/>
            <person name="Jedd G."/>
            <person name="Mewes H.-W."/>
            <person name="Staben C."/>
            <person name="Marcotte E."/>
            <person name="Greenberg D."/>
            <person name="Roy A."/>
            <person name="Foley K."/>
            <person name="Naylor J."/>
            <person name="Stange-Thomann N."/>
            <person name="Barrett R."/>
            <person name="Gnerre S."/>
            <person name="Kamal M."/>
            <person name="Kamvysselis M."/>
            <person name="Mauceli E.W."/>
            <person name="Bielke C."/>
            <person name="Rudd S."/>
            <person name="Frishman D."/>
            <person name="Krystofova S."/>
            <person name="Rasmussen C."/>
            <person name="Metzenberg R.L."/>
            <person name="Perkins D.D."/>
            <person name="Kroken S."/>
            <person name="Cogoni C."/>
            <person name="Macino G."/>
            <person name="Catcheside D.E.A."/>
            <person name="Li W."/>
            <person name="Pratt R.J."/>
            <person name="Osmani S.A."/>
            <person name="DeSouza C.P.C."/>
            <person name="Glass N.L."/>
            <person name="Orbach M.J."/>
            <person name="Berglund J.A."/>
            <person name="Voelker R."/>
            <person name="Yarden O."/>
            <person name="Plamann M."/>
            <person name="Seiler S."/>
            <person name="Dunlap J.C."/>
            <person name="Radford A."/>
            <person name="Aramayo R."/>
            <person name="Natvig D.O."/>
            <person name="Alex L.A."/>
            <person name="Mannhaupt G."/>
            <person name="Ebbole D.J."/>
            <person name="Freitag M."/>
            <person name="Paulsen I."/>
            <person name="Sachs M.S."/>
            <person name="Lander E.S."/>
            <person name="Nusbaum C."/>
            <person name="Birren B.W."/>
        </authorList>
    </citation>
    <scope>NUCLEOTIDE SEQUENCE [LARGE SCALE GENOMIC DNA]</scope>
    <source>
        <strain>ATCC 24698 / 74-OR23-1A / CBS 708.71 / DSM 1257 / FGSC 987</strain>
    </source>
</reference>
<reference key="4">
    <citation type="journal article" date="1986" name="J. Biol. Chem.">
        <title>Nuclear genes for cytochrome c oxidase subunits of Neurospora crassa. Isolation and characterization of cDNA clones for subunits IV, V, VI, and possibly VII.</title>
        <authorList>
            <person name="Sachs M.S."/>
            <person name="David M."/>
            <person name="Werner S."/>
            <person name="RajBhandary U.L."/>
        </authorList>
    </citation>
    <scope>NUCLEOTIDE SEQUENCE [GENOMIC DNA] OF 1-67</scope>
</reference>
<reference key="5">
    <citation type="journal article" date="2007" name="Eukaryot. Cell">
        <title>Supramolecular organization of the respiratory chain in Neurospora crassa mitochondria.</title>
        <authorList>
            <person name="Marques I."/>
            <person name="Dencher N.A."/>
            <person name="Videira A."/>
            <person name="Krause F."/>
        </authorList>
    </citation>
    <scope>COMPOSITION OF THE CYTOCHROME C OXIDASE COMPLEX</scope>
    <scope>IDENTIFICATION BY MASS SPECTROMETRY</scope>
</reference>
<reference key="6">
    <citation type="journal article" date="2019" name="IUCrJ">
        <title>Cryo-EM structure of Neurospora crassa respiratory complex IV.</title>
        <authorList>
            <person name="Bausewein T."/>
            <person name="Nussberger S."/>
            <person name="Kuehlbrandt W."/>
        </authorList>
    </citation>
    <scope>STRUCTURE BY ELECTRON MICROSCOPY (5.5 ANGSTROMS)</scope>
    <scope>SUBUNIT</scope>
</reference>
<proteinExistence type="evidence at protein level"/>
<comment type="function">
    <text evidence="1">Component of the cytochrome c oxidase, the last enzyme in the mitochondrial electron transport chain which drives oxidative phosphorylation. The respiratory chain contains 3 multisubunit complexes succinate dehydrogenase (complex II, CII), ubiquinol-cytochrome c oxidoreductase (cytochrome b-c1 complex, complex III, CIII) and cytochrome c oxidase (complex IV, CIV), that cooperate to transfer electrons derived from NADH and succinate to molecular oxygen, creating an electrochemical gradient over the inner membrane that drives transmembrane transport and the ATP synthase. Cytochrome c oxidase is the component of the respiratory chain that catalyzes the reduction of oxygen to water. Electrons originating from reduced cytochrome c in the intermembrane space (IMS) are transferred via the dinuclear copper A center (CU(A)) of Cox2 and heme A of Cox1 to the active site in Cox1, a binuclear center (BNC) formed by heme A3 and copper B (CU(B)). The BNC reduces molecular oxygen to 2 water molecules using 4 electrons from cytochrome c in the IMS and 4 protons from the mitochondrial matrix.</text>
</comment>
<comment type="pathway">
    <text evidence="1">Energy metabolism; oxidative phosphorylation.</text>
</comment>
<comment type="subunit">
    <text evidence="4 5">Component of the cytochrome c oxidase (complex IV, CIV), a multisubunit enzyme composed of 11 subunits. The complex is composed of a catalytic core of 3 subunits Cox1, Cox2 and Cox3, encoded in the mitochondrial DNA, and 8 supernumerary subunits Cox4, Cox5a/Cox5, Cox6, Cox7, Cox8, Cox7a/Cox9, Cox6b/Cox12 and Cox6a/Cox13, which are encoded in the nuclear genome (PubMed:31316820). The complex exists as a monomer or a dimer and forms respiratory supercomplexes (SCs) in the inner mitochondrial membrane with NADH-ubiquinone oxidoreductase (complex I, CI) and ubiquinol-cytochrome c oxidoreductase (cytochrome b-c1 complex, complex III, CIII), resulting in various different assemblies (supercomplexes I(1)IV(1), I(1)III(3)IV(2), III(2)IV(1) and III(2)IV(2) as well as larger supercomplexes of compositions like I(1)III(2)IV(5-6)) (PubMed:17873079).</text>
</comment>
<comment type="subcellular location">
    <subcellularLocation>
        <location evidence="1">Mitochondrion inner membrane</location>
        <topology evidence="1">Single-pass membrane protein</topology>
    </subcellularLocation>
</comment>
<comment type="similarity">
    <text evidence="7">Belongs to the cytochrome c oxidase IV family.</text>
</comment>
<organism>
    <name type="scientific">Neurospora crassa (strain ATCC 24698 / 74-OR23-1A / CBS 708.71 / DSM 1257 / FGSC 987)</name>
    <dbReference type="NCBI Taxonomy" id="367110"/>
    <lineage>
        <taxon>Eukaryota</taxon>
        <taxon>Fungi</taxon>
        <taxon>Dikarya</taxon>
        <taxon>Ascomycota</taxon>
        <taxon>Pezizomycotina</taxon>
        <taxon>Sordariomycetes</taxon>
        <taxon>Sordariomycetidae</taxon>
        <taxon>Sordariales</taxon>
        <taxon>Sordariaceae</taxon>
        <taxon>Neurospora</taxon>
    </lineage>
</organism>
<sequence>MLRTPTVSALVRNVAVRAAKPTMAVRAASTMPISNPTLANIEKRWEQMPMQEQAELWMALRDRMKGNWADLTLQEKKAAYYIAFGPHGPRALPPPGEQKKVLAYTVAGVFLSFVIFATMRAFAKPPPATMTKEWQEATNEFLKAQKSDPLTGLTSEGYNGKGHVQSPSASA</sequence>
<name>COX5_NEUCR</name>
<protein>
    <recommendedName>
        <fullName>Cytochrome c oxidase subunit 5, mitochondrial</fullName>
    </recommendedName>
    <alternativeName>
        <fullName>Cytochrome a-4 protein</fullName>
    </alternativeName>
    <alternativeName>
        <fullName>Cytochrome c oxidase polypeptide V</fullName>
    </alternativeName>
    <alternativeName>
        <fullName evidence="6">Cytochrome c oxidase subunit Cox5a</fullName>
    </alternativeName>
</protein>
<accession>P06810</accession>
<accession>Q7RVI9</accession>